<keyword id="KW-0002">3D-structure</keyword>
<keyword id="KW-1185">Reference proteome</keyword>
<keyword id="KW-0687">Ribonucleoprotein</keyword>
<keyword id="KW-0689">Ribosomal protein</keyword>
<sequence>MRQTFMANESNIERKWYVIDAEGQTLGRLSSEVASILRGKNKVTYTPHVDTGDYVIVINASKIEFTGNKETDKVYYRHSNHPGGIKSITAGELRRTNPERLIENSIKGMLPSTRLGEKQGKKLFVYGGAEHPHAAQQPENYELRG</sequence>
<proteinExistence type="evidence at protein level"/>
<feature type="chain" id="PRO_1000055477" description="Large ribosomal subunit protein uL13">
    <location>
        <begin position="1"/>
        <end position="145"/>
    </location>
</feature>
<feature type="turn" evidence="7">
    <location>
        <begin position="9"/>
        <end position="11"/>
    </location>
</feature>
<feature type="strand" evidence="7">
    <location>
        <begin position="16"/>
        <end position="19"/>
    </location>
</feature>
<feature type="helix" evidence="7">
    <location>
        <begin position="28"/>
        <end position="37"/>
    </location>
</feature>
<feature type="turn" evidence="7">
    <location>
        <begin position="38"/>
        <end position="41"/>
    </location>
</feature>
<feature type="strand" evidence="3">
    <location>
        <begin position="47"/>
        <end position="49"/>
    </location>
</feature>
<feature type="strand" evidence="7">
    <location>
        <begin position="54"/>
        <end position="57"/>
    </location>
</feature>
<feature type="strand" evidence="8">
    <location>
        <begin position="61"/>
        <end position="64"/>
    </location>
</feature>
<feature type="strand" evidence="6">
    <location>
        <begin position="66"/>
        <end position="68"/>
    </location>
</feature>
<feature type="turn" evidence="7">
    <location>
        <begin position="69"/>
        <end position="71"/>
    </location>
</feature>
<feature type="strand" evidence="4">
    <location>
        <begin position="74"/>
        <end position="78"/>
    </location>
</feature>
<feature type="strand" evidence="5">
    <location>
        <begin position="80"/>
        <end position="83"/>
    </location>
</feature>
<feature type="strand" evidence="4">
    <location>
        <begin position="85"/>
        <end position="89"/>
    </location>
</feature>
<feature type="helix" evidence="7">
    <location>
        <begin position="90"/>
        <end position="95"/>
    </location>
</feature>
<feature type="helix" evidence="7">
    <location>
        <begin position="98"/>
        <end position="107"/>
    </location>
</feature>
<feature type="helix" evidence="7">
    <location>
        <begin position="114"/>
        <end position="119"/>
    </location>
</feature>
<feature type="helix" evidence="4">
    <location>
        <begin position="120"/>
        <end position="122"/>
    </location>
</feature>
<feature type="strand" evidence="4">
    <location>
        <begin position="123"/>
        <end position="125"/>
    </location>
</feature>
<feature type="strand" evidence="7">
    <location>
        <begin position="127"/>
        <end position="129"/>
    </location>
</feature>
<feature type="helix" evidence="7">
    <location>
        <begin position="134"/>
        <end position="136"/>
    </location>
</feature>
<dbReference type="EMBL" id="CP000253">
    <property type="protein sequence ID" value="ABD31498.1"/>
    <property type="molecule type" value="Genomic_DNA"/>
</dbReference>
<dbReference type="RefSeq" id="WP_001250038.1">
    <property type="nucleotide sequence ID" value="NZ_LS483365.1"/>
</dbReference>
<dbReference type="RefSeq" id="YP_500947.1">
    <property type="nucleotide sequence ID" value="NC_007795.1"/>
</dbReference>
<dbReference type="PDB" id="4WCE">
    <property type="method" value="X-ray"/>
    <property type="resolution" value="3.53 A"/>
    <property type="chains" value="G=1-145"/>
</dbReference>
<dbReference type="PDB" id="4WF9">
    <property type="method" value="X-ray"/>
    <property type="resolution" value="3.43 A"/>
    <property type="chains" value="G=1-145"/>
</dbReference>
<dbReference type="PDB" id="4WFA">
    <property type="method" value="X-ray"/>
    <property type="resolution" value="3.39 A"/>
    <property type="chains" value="G=1-145"/>
</dbReference>
<dbReference type="PDB" id="4WFB">
    <property type="method" value="X-ray"/>
    <property type="resolution" value="3.43 A"/>
    <property type="chains" value="G=1-145"/>
</dbReference>
<dbReference type="PDB" id="5HKV">
    <property type="method" value="X-ray"/>
    <property type="resolution" value="3.66 A"/>
    <property type="chains" value="G=1-145"/>
</dbReference>
<dbReference type="PDB" id="5HL7">
    <property type="method" value="X-ray"/>
    <property type="resolution" value="3.55 A"/>
    <property type="chains" value="G=1-145"/>
</dbReference>
<dbReference type="PDB" id="5LI0">
    <property type="method" value="EM"/>
    <property type="resolution" value="3.80 A"/>
    <property type="chains" value="M=1-145"/>
</dbReference>
<dbReference type="PDB" id="5ND8">
    <property type="method" value="EM"/>
    <property type="resolution" value="3.70 A"/>
    <property type="chains" value="M=1-145"/>
</dbReference>
<dbReference type="PDB" id="5ND9">
    <property type="method" value="EM"/>
    <property type="resolution" value="3.70 A"/>
    <property type="chains" value="M=1-145"/>
</dbReference>
<dbReference type="PDB" id="5NRG">
    <property type="method" value="X-ray"/>
    <property type="resolution" value="3.44 A"/>
    <property type="chains" value="G=1-145"/>
</dbReference>
<dbReference type="PDB" id="5TCU">
    <property type="method" value="EM"/>
    <property type="resolution" value="3.90 A"/>
    <property type="chains" value="LM=1-145"/>
</dbReference>
<dbReference type="PDB" id="6DDD">
    <property type="method" value="EM"/>
    <property type="resolution" value="3.10 A"/>
    <property type="chains" value="V=1-145"/>
</dbReference>
<dbReference type="PDB" id="6DDG">
    <property type="method" value="EM"/>
    <property type="resolution" value="3.10 A"/>
    <property type="chains" value="V=1-145"/>
</dbReference>
<dbReference type="PDB" id="6HMA">
    <property type="method" value="EM"/>
    <property type="resolution" value="2.65 A"/>
    <property type="chains" value="H=1-145"/>
</dbReference>
<dbReference type="PDB" id="6SJ6">
    <property type="method" value="EM"/>
    <property type="resolution" value="3.23 A"/>
    <property type="chains" value="M=1-145"/>
</dbReference>
<dbReference type="PDB" id="6WQN">
    <property type="method" value="EM"/>
    <property type="resolution" value="2.90 A"/>
    <property type="chains" value="V=1-145"/>
</dbReference>
<dbReference type="PDB" id="6WQQ">
    <property type="method" value="EM"/>
    <property type="resolution" value="3.10 A"/>
    <property type="chains" value="V=1-145"/>
</dbReference>
<dbReference type="PDB" id="6WRS">
    <property type="method" value="EM"/>
    <property type="resolution" value="3.20 A"/>
    <property type="chains" value="V=1-145"/>
</dbReference>
<dbReference type="PDB" id="6WRU">
    <property type="method" value="EM"/>
    <property type="resolution" value="3.10 A"/>
    <property type="chains" value="V=1-145"/>
</dbReference>
<dbReference type="PDB" id="6YEF">
    <property type="method" value="EM"/>
    <property type="resolution" value="3.20 A"/>
    <property type="chains" value="M=1-145"/>
</dbReference>
<dbReference type="PDB" id="7ASM">
    <property type="method" value="EM"/>
    <property type="resolution" value="2.48 A"/>
    <property type="chains" value="H=1-145"/>
</dbReference>
<dbReference type="PDB" id="7ASN">
    <property type="method" value="EM"/>
    <property type="resolution" value="2.73 A"/>
    <property type="chains" value="H=3-145"/>
</dbReference>
<dbReference type="PDB" id="7NHL">
    <property type="method" value="EM"/>
    <property type="resolution" value="3.10 A"/>
    <property type="chains" value="M=1-145"/>
</dbReference>
<dbReference type="PDB" id="7NHM">
    <property type="method" value="EM"/>
    <property type="resolution" value="3.10 A"/>
    <property type="chains" value="M=1-145"/>
</dbReference>
<dbReference type="PDB" id="7TTU">
    <property type="method" value="EM"/>
    <property type="resolution" value="3.00 A"/>
    <property type="chains" value="V=1-145"/>
</dbReference>
<dbReference type="PDB" id="7TTW">
    <property type="method" value="EM"/>
    <property type="resolution" value="2.90 A"/>
    <property type="chains" value="V=1-145"/>
</dbReference>
<dbReference type="PDB" id="8P2F">
    <property type="method" value="EM"/>
    <property type="resolution" value="2.44 A"/>
    <property type="chains" value="M=1-145"/>
</dbReference>
<dbReference type="PDB" id="8P2G">
    <property type="method" value="EM"/>
    <property type="resolution" value="2.02 A"/>
    <property type="chains" value="M=1-145"/>
</dbReference>
<dbReference type="PDB" id="8P2H">
    <property type="method" value="EM"/>
    <property type="resolution" value="2.49 A"/>
    <property type="chains" value="M=1-145"/>
</dbReference>
<dbReference type="PDBsum" id="4WCE"/>
<dbReference type="PDBsum" id="4WF9"/>
<dbReference type="PDBsum" id="4WFA"/>
<dbReference type="PDBsum" id="4WFB"/>
<dbReference type="PDBsum" id="5HKV"/>
<dbReference type="PDBsum" id="5HL7"/>
<dbReference type="PDBsum" id="5LI0"/>
<dbReference type="PDBsum" id="5ND8"/>
<dbReference type="PDBsum" id="5ND9"/>
<dbReference type="PDBsum" id="5NRG"/>
<dbReference type="PDBsum" id="5TCU"/>
<dbReference type="PDBsum" id="6DDD"/>
<dbReference type="PDBsum" id="6DDG"/>
<dbReference type="PDBsum" id="6HMA"/>
<dbReference type="PDBsum" id="6SJ6"/>
<dbReference type="PDBsum" id="6WQN"/>
<dbReference type="PDBsum" id="6WQQ"/>
<dbReference type="PDBsum" id="6WRS"/>
<dbReference type="PDBsum" id="6WRU"/>
<dbReference type="PDBsum" id="6YEF"/>
<dbReference type="PDBsum" id="7ASM"/>
<dbReference type="PDBsum" id="7ASN"/>
<dbReference type="PDBsum" id="7NHL"/>
<dbReference type="PDBsum" id="7NHM"/>
<dbReference type="PDBsum" id="7TTU"/>
<dbReference type="PDBsum" id="7TTW"/>
<dbReference type="PDBsum" id="8P2F"/>
<dbReference type="PDBsum" id="8P2G"/>
<dbReference type="PDBsum" id="8P2H"/>
<dbReference type="EMDB" id="EMD-10212"/>
<dbReference type="EMDB" id="EMD-10791"/>
<dbReference type="EMDB" id="EMD-12332"/>
<dbReference type="EMDB" id="EMD-12333"/>
<dbReference type="EMDB" id="EMD-17363"/>
<dbReference type="EMDB" id="EMD-17364"/>
<dbReference type="EMDB" id="EMD-17365"/>
<dbReference type="EMDB" id="EMD-3624"/>
<dbReference type="EMDB" id="EMD-3625"/>
<dbReference type="EMDB" id="EMD-4050"/>
<dbReference type="EMDB" id="EMD-8402"/>
<dbReference type="SMR" id="Q2FW38"/>
<dbReference type="IntAct" id="Q2FW38">
    <property type="interactions" value="1"/>
</dbReference>
<dbReference type="STRING" id="93061.SAOUHSC_02478"/>
<dbReference type="PaxDb" id="1280-SAXN108_2468"/>
<dbReference type="GeneID" id="3920856"/>
<dbReference type="GeneID" id="98346530"/>
<dbReference type="KEGG" id="sao:SAOUHSC_02478"/>
<dbReference type="PATRIC" id="fig|93061.5.peg.2235"/>
<dbReference type="eggNOG" id="COG0102">
    <property type="taxonomic scope" value="Bacteria"/>
</dbReference>
<dbReference type="HOGENOM" id="CLU_082184_2_2_9"/>
<dbReference type="OrthoDB" id="9801330at2"/>
<dbReference type="EvolutionaryTrace" id="Q2FW38"/>
<dbReference type="PRO" id="PR:Q2FW38"/>
<dbReference type="Proteomes" id="UP000008816">
    <property type="component" value="Chromosome"/>
</dbReference>
<dbReference type="GO" id="GO:0022625">
    <property type="term" value="C:cytosolic large ribosomal subunit"/>
    <property type="evidence" value="ECO:0000318"/>
    <property type="project" value="GO_Central"/>
</dbReference>
<dbReference type="GO" id="GO:0005840">
    <property type="term" value="C:ribosome"/>
    <property type="evidence" value="ECO:0000318"/>
    <property type="project" value="GO_Central"/>
</dbReference>
<dbReference type="GO" id="GO:0003729">
    <property type="term" value="F:mRNA binding"/>
    <property type="evidence" value="ECO:0000318"/>
    <property type="project" value="GO_Central"/>
</dbReference>
<dbReference type="GO" id="GO:0003735">
    <property type="term" value="F:structural constituent of ribosome"/>
    <property type="evidence" value="ECO:0000318"/>
    <property type="project" value="GO_Central"/>
</dbReference>
<dbReference type="GO" id="GO:0017148">
    <property type="term" value="P:negative regulation of translation"/>
    <property type="evidence" value="ECO:0000318"/>
    <property type="project" value="GO_Central"/>
</dbReference>
<dbReference type="GO" id="GO:0006412">
    <property type="term" value="P:translation"/>
    <property type="evidence" value="ECO:0007669"/>
    <property type="project" value="UniProtKB-UniRule"/>
</dbReference>
<dbReference type="CDD" id="cd00392">
    <property type="entry name" value="Ribosomal_L13"/>
    <property type="match status" value="1"/>
</dbReference>
<dbReference type="FunFam" id="3.90.1180.10:FF:000001">
    <property type="entry name" value="50S ribosomal protein L13"/>
    <property type="match status" value="1"/>
</dbReference>
<dbReference type="Gene3D" id="3.90.1180.10">
    <property type="entry name" value="Ribosomal protein L13"/>
    <property type="match status" value="1"/>
</dbReference>
<dbReference type="HAMAP" id="MF_01366">
    <property type="entry name" value="Ribosomal_uL13"/>
    <property type="match status" value="1"/>
</dbReference>
<dbReference type="InterPro" id="IPR005822">
    <property type="entry name" value="Ribosomal_uL13"/>
</dbReference>
<dbReference type="InterPro" id="IPR005823">
    <property type="entry name" value="Ribosomal_uL13_bac-type"/>
</dbReference>
<dbReference type="InterPro" id="IPR023563">
    <property type="entry name" value="Ribosomal_uL13_CS"/>
</dbReference>
<dbReference type="InterPro" id="IPR036899">
    <property type="entry name" value="Ribosomal_uL13_sf"/>
</dbReference>
<dbReference type="NCBIfam" id="TIGR01066">
    <property type="entry name" value="rplM_bact"/>
    <property type="match status" value="1"/>
</dbReference>
<dbReference type="PANTHER" id="PTHR11545:SF2">
    <property type="entry name" value="LARGE RIBOSOMAL SUBUNIT PROTEIN UL13M"/>
    <property type="match status" value="1"/>
</dbReference>
<dbReference type="PANTHER" id="PTHR11545">
    <property type="entry name" value="RIBOSOMAL PROTEIN L13"/>
    <property type="match status" value="1"/>
</dbReference>
<dbReference type="Pfam" id="PF00572">
    <property type="entry name" value="Ribosomal_L13"/>
    <property type="match status" value="1"/>
</dbReference>
<dbReference type="PIRSF" id="PIRSF002181">
    <property type="entry name" value="Ribosomal_L13"/>
    <property type="match status" value="1"/>
</dbReference>
<dbReference type="SUPFAM" id="SSF52161">
    <property type="entry name" value="Ribosomal protein L13"/>
    <property type="match status" value="1"/>
</dbReference>
<dbReference type="PROSITE" id="PS00783">
    <property type="entry name" value="RIBOSOMAL_L13"/>
    <property type="match status" value="1"/>
</dbReference>
<protein>
    <recommendedName>
        <fullName evidence="1">Large ribosomal subunit protein uL13</fullName>
    </recommendedName>
    <alternativeName>
        <fullName evidence="2">50S ribosomal protein L13</fullName>
    </alternativeName>
</protein>
<accession>Q2FW38</accession>
<organism>
    <name type="scientific">Staphylococcus aureus (strain NCTC 8325 / PS 47)</name>
    <dbReference type="NCBI Taxonomy" id="93061"/>
    <lineage>
        <taxon>Bacteria</taxon>
        <taxon>Bacillati</taxon>
        <taxon>Bacillota</taxon>
        <taxon>Bacilli</taxon>
        <taxon>Bacillales</taxon>
        <taxon>Staphylococcaceae</taxon>
        <taxon>Staphylococcus</taxon>
    </lineage>
</organism>
<gene>
    <name evidence="1" type="primary">rplM</name>
    <name type="ordered locus">SAOUHSC_02478</name>
</gene>
<reference key="1">
    <citation type="book" date="2006" name="Gram positive pathogens, 2nd edition">
        <title>The Staphylococcus aureus NCTC 8325 genome.</title>
        <editorList>
            <person name="Fischetti V."/>
            <person name="Novick R."/>
            <person name="Ferretti J."/>
            <person name="Portnoy D."/>
            <person name="Rood J."/>
        </editorList>
        <authorList>
            <person name="Gillaspy A.F."/>
            <person name="Worrell V."/>
            <person name="Orvis J."/>
            <person name="Roe B.A."/>
            <person name="Dyer D.W."/>
            <person name="Iandolo J.J."/>
        </authorList>
    </citation>
    <scope>NUCLEOTIDE SEQUENCE [LARGE SCALE GENOMIC DNA]</scope>
    <source>
        <strain>NCTC 8325 / PS 47</strain>
    </source>
</reference>
<evidence type="ECO:0000255" key="1">
    <source>
        <dbReference type="HAMAP-Rule" id="MF_01366"/>
    </source>
</evidence>
<evidence type="ECO:0000305" key="2"/>
<evidence type="ECO:0007829" key="3">
    <source>
        <dbReference type="PDB" id="6DDG"/>
    </source>
</evidence>
<evidence type="ECO:0007829" key="4">
    <source>
        <dbReference type="PDB" id="6HMA"/>
    </source>
</evidence>
<evidence type="ECO:0007829" key="5">
    <source>
        <dbReference type="PDB" id="6SJ6"/>
    </source>
</evidence>
<evidence type="ECO:0007829" key="6">
    <source>
        <dbReference type="PDB" id="6WRU"/>
    </source>
</evidence>
<evidence type="ECO:0007829" key="7">
    <source>
        <dbReference type="PDB" id="7ASM"/>
    </source>
</evidence>
<evidence type="ECO:0007829" key="8">
    <source>
        <dbReference type="PDB" id="7ASN"/>
    </source>
</evidence>
<comment type="function">
    <text evidence="1">This protein is one of the early assembly proteins of the 50S ribosomal subunit, although it is not seen to bind rRNA by itself. It is important during the early stages of 50S assembly.</text>
</comment>
<comment type="subunit">
    <text evidence="1">Part of the 50S ribosomal subunit.</text>
</comment>
<comment type="similarity">
    <text evidence="1">Belongs to the universal ribosomal protein uL13 family.</text>
</comment>
<name>RL13_STAA8</name>